<dbReference type="EMBL" id="CP000948">
    <property type="protein sequence ID" value="ACB01255.1"/>
    <property type="molecule type" value="Genomic_DNA"/>
</dbReference>
<dbReference type="RefSeq" id="WP_000610901.1">
    <property type="nucleotide sequence ID" value="NC_010473.1"/>
</dbReference>
<dbReference type="SMR" id="B1XC51"/>
<dbReference type="GeneID" id="93777385"/>
<dbReference type="KEGG" id="ecd:ECDH10B_0051"/>
<dbReference type="HOGENOM" id="CLU_128074_0_0_6"/>
<dbReference type="GO" id="GO:0070987">
    <property type="term" value="P:error-free translesion synthesis"/>
    <property type="evidence" value="ECO:0007669"/>
    <property type="project" value="TreeGrafter"/>
</dbReference>
<dbReference type="Gene3D" id="2.60.40.1470">
    <property type="entry name" value="ApaG domain"/>
    <property type="match status" value="1"/>
</dbReference>
<dbReference type="HAMAP" id="MF_00791">
    <property type="entry name" value="ApaG"/>
    <property type="match status" value="1"/>
</dbReference>
<dbReference type="InterPro" id="IPR007474">
    <property type="entry name" value="ApaG_domain"/>
</dbReference>
<dbReference type="InterPro" id="IPR036767">
    <property type="entry name" value="ApaG_sf"/>
</dbReference>
<dbReference type="InterPro" id="IPR023065">
    <property type="entry name" value="Uncharacterised_ApaG"/>
</dbReference>
<dbReference type="NCBIfam" id="NF003967">
    <property type="entry name" value="PRK05461.1"/>
    <property type="match status" value="1"/>
</dbReference>
<dbReference type="PANTHER" id="PTHR14289">
    <property type="entry name" value="F-BOX ONLY PROTEIN 3"/>
    <property type="match status" value="1"/>
</dbReference>
<dbReference type="PANTHER" id="PTHR14289:SF16">
    <property type="entry name" value="POLYMERASE DELTA-INTERACTING PROTEIN 2"/>
    <property type="match status" value="1"/>
</dbReference>
<dbReference type="Pfam" id="PF04379">
    <property type="entry name" value="DUF525"/>
    <property type="match status" value="1"/>
</dbReference>
<dbReference type="SUPFAM" id="SSF110069">
    <property type="entry name" value="ApaG-like"/>
    <property type="match status" value="1"/>
</dbReference>
<dbReference type="PROSITE" id="PS51087">
    <property type="entry name" value="APAG"/>
    <property type="match status" value="1"/>
</dbReference>
<proteinExistence type="inferred from homology"/>
<feature type="chain" id="PRO_1000133787" description="Protein ApaG">
    <location>
        <begin position="1"/>
        <end position="125"/>
    </location>
</feature>
<feature type="domain" description="ApaG" evidence="1">
    <location>
        <begin position="1"/>
        <end position="125"/>
    </location>
</feature>
<sequence length="125" mass="13867">MINSPRVCIQVQSVYIEAQSSPDNERYVFAYTVTIRNLGRAPVQLLGRYWLITNGNGRETEVQGEGVVGVQPLIAPGEEYQYTSGAIIETPLGTMQGHYEMIDENGVPFSIDIPVFRLAVPTLIH</sequence>
<organism>
    <name type="scientific">Escherichia coli (strain K12 / DH10B)</name>
    <dbReference type="NCBI Taxonomy" id="316385"/>
    <lineage>
        <taxon>Bacteria</taxon>
        <taxon>Pseudomonadati</taxon>
        <taxon>Pseudomonadota</taxon>
        <taxon>Gammaproteobacteria</taxon>
        <taxon>Enterobacterales</taxon>
        <taxon>Enterobacteriaceae</taxon>
        <taxon>Escherichia</taxon>
    </lineage>
</organism>
<gene>
    <name evidence="1" type="primary">apaG</name>
    <name type="ordered locus">ECDH10B_0051</name>
</gene>
<protein>
    <recommendedName>
        <fullName evidence="1">Protein ApaG</fullName>
    </recommendedName>
</protein>
<accession>B1XC51</accession>
<evidence type="ECO:0000255" key="1">
    <source>
        <dbReference type="HAMAP-Rule" id="MF_00791"/>
    </source>
</evidence>
<reference key="1">
    <citation type="journal article" date="2008" name="J. Bacteriol.">
        <title>The complete genome sequence of Escherichia coli DH10B: insights into the biology of a laboratory workhorse.</title>
        <authorList>
            <person name="Durfee T."/>
            <person name="Nelson R."/>
            <person name="Baldwin S."/>
            <person name="Plunkett G. III"/>
            <person name="Burland V."/>
            <person name="Mau B."/>
            <person name="Petrosino J.F."/>
            <person name="Qin X."/>
            <person name="Muzny D.M."/>
            <person name="Ayele M."/>
            <person name="Gibbs R.A."/>
            <person name="Csorgo B."/>
            <person name="Posfai G."/>
            <person name="Weinstock G.M."/>
            <person name="Blattner F.R."/>
        </authorList>
    </citation>
    <scope>NUCLEOTIDE SEQUENCE [LARGE SCALE GENOMIC DNA]</scope>
    <source>
        <strain>K12 / DH10B</strain>
    </source>
</reference>
<name>APAG_ECODH</name>